<organism>
    <name type="scientific">Shewanella amazonensis (strain ATCC BAA-1098 / SB2B)</name>
    <dbReference type="NCBI Taxonomy" id="326297"/>
    <lineage>
        <taxon>Bacteria</taxon>
        <taxon>Pseudomonadati</taxon>
        <taxon>Pseudomonadota</taxon>
        <taxon>Gammaproteobacteria</taxon>
        <taxon>Alteromonadales</taxon>
        <taxon>Shewanellaceae</taxon>
        <taxon>Shewanella</taxon>
    </lineage>
</organism>
<gene>
    <name evidence="2" type="primary">mutM</name>
    <name evidence="2" type="synonym">fpg</name>
    <name type="ordered locus">Sama_0117</name>
</gene>
<evidence type="ECO:0000250" key="1"/>
<evidence type="ECO:0000255" key="2">
    <source>
        <dbReference type="HAMAP-Rule" id="MF_00103"/>
    </source>
</evidence>
<keyword id="KW-0227">DNA damage</keyword>
<keyword id="KW-0234">DNA repair</keyword>
<keyword id="KW-0238">DNA-binding</keyword>
<keyword id="KW-0326">Glycosidase</keyword>
<keyword id="KW-0378">Hydrolase</keyword>
<keyword id="KW-0456">Lyase</keyword>
<keyword id="KW-0479">Metal-binding</keyword>
<keyword id="KW-0511">Multifunctional enzyme</keyword>
<keyword id="KW-1185">Reference proteome</keyword>
<keyword id="KW-0862">Zinc</keyword>
<keyword id="KW-0863">Zinc-finger</keyword>
<reference key="1">
    <citation type="submission" date="2006-12" db="EMBL/GenBank/DDBJ databases">
        <title>Complete sequence of Shewanella amazonensis SB2B.</title>
        <authorList>
            <consortium name="US DOE Joint Genome Institute"/>
            <person name="Copeland A."/>
            <person name="Lucas S."/>
            <person name="Lapidus A."/>
            <person name="Barry K."/>
            <person name="Detter J.C."/>
            <person name="Glavina del Rio T."/>
            <person name="Hammon N."/>
            <person name="Israni S."/>
            <person name="Dalin E."/>
            <person name="Tice H."/>
            <person name="Pitluck S."/>
            <person name="Munk A.C."/>
            <person name="Brettin T."/>
            <person name="Bruce D."/>
            <person name="Han C."/>
            <person name="Tapia R."/>
            <person name="Gilna P."/>
            <person name="Schmutz J."/>
            <person name="Larimer F."/>
            <person name="Land M."/>
            <person name="Hauser L."/>
            <person name="Kyrpides N."/>
            <person name="Mikhailova N."/>
            <person name="Fredrickson J."/>
            <person name="Richardson P."/>
        </authorList>
    </citation>
    <scope>NUCLEOTIDE SEQUENCE [LARGE SCALE GENOMIC DNA]</scope>
    <source>
        <strain>ATCC BAA-1098 / SB2B</strain>
    </source>
</reference>
<comment type="function">
    <text evidence="2">Involved in base excision repair of DNA damaged by oxidation or by mutagenic agents. Acts as a DNA glycosylase that recognizes and removes damaged bases. Has a preference for oxidized purines, such as 7,8-dihydro-8-oxoguanine (8-oxoG). Has AP (apurinic/apyrimidinic) lyase activity and introduces nicks in the DNA strand. Cleaves the DNA backbone by beta-delta elimination to generate a single-strand break at the site of the removed base with both 3'- and 5'-phosphates.</text>
</comment>
<comment type="catalytic activity">
    <reaction evidence="2">
        <text>Hydrolysis of DNA containing ring-opened 7-methylguanine residues, releasing 2,6-diamino-4-hydroxy-5-(N-methyl)formamidopyrimidine.</text>
        <dbReference type="EC" id="3.2.2.23"/>
    </reaction>
</comment>
<comment type="catalytic activity">
    <reaction evidence="2">
        <text>2'-deoxyribonucleotide-(2'-deoxyribose 5'-phosphate)-2'-deoxyribonucleotide-DNA = a 3'-end 2'-deoxyribonucleotide-(2,3-dehydro-2,3-deoxyribose 5'-phosphate)-DNA + a 5'-end 5'-phospho-2'-deoxyribonucleoside-DNA + H(+)</text>
        <dbReference type="Rhea" id="RHEA:66592"/>
        <dbReference type="Rhea" id="RHEA-COMP:13180"/>
        <dbReference type="Rhea" id="RHEA-COMP:16897"/>
        <dbReference type="Rhea" id="RHEA-COMP:17067"/>
        <dbReference type="ChEBI" id="CHEBI:15378"/>
        <dbReference type="ChEBI" id="CHEBI:136412"/>
        <dbReference type="ChEBI" id="CHEBI:157695"/>
        <dbReference type="ChEBI" id="CHEBI:167181"/>
        <dbReference type="EC" id="4.2.99.18"/>
    </reaction>
</comment>
<comment type="cofactor">
    <cofactor evidence="2">
        <name>Zn(2+)</name>
        <dbReference type="ChEBI" id="CHEBI:29105"/>
    </cofactor>
    <text evidence="2">Binds 1 zinc ion per subunit.</text>
</comment>
<comment type="subunit">
    <text evidence="2">Monomer.</text>
</comment>
<comment type="similarity">
    <text evidence="2">Belongs to the FPG family.</text>
</comment>
<feature type="initiator methionine" description="Removed" evidence="1">
    <location>
        <position position="1"/>
    </location>
</feature>
<feature type="chain" id="PRO_1000008769" description="Formamidopyrimidine-DNA glycosylase">
    <location>
        <begin position="2"/>
        <end position="271"/>
    </location>
</feature>
<feature type="zinc finger region" description="FPG-type" evidence="2">
    <location>
        <begin position="236"/>
        <end position="270"/>
    </location>
</feature>
<feature type="active site" description="Schiff-base intermediate with DNA" evidence="2">
    <location>
        <position position="2"/>
    </location>
</feature>
<feature type="active site" description="Proton donor" evidence="2">
    <location>
        <position position="3"/>
    </location>
</feature>
<feature type="active site" description="Proton donor; for beta-elimination activity" evidence="2">
    <location>
        <position position="57"/>
    </location>
</feature>
<feature type="active site" description="Proton donor; for delta-elimination activity" evidence="2">
    <location>
        <position position="260"/>
    </location>
</feature>
<feature type="binding site" evidence="2">
    <location>
        <position position="90"/>
    </location>
    <ligand>
        <name>DNA</name>
        <dbReference type="ChEBI" id="CHEBI:16991"/>
    </ligand>
</feature>
<feature type="binding site" evidence="2">
    <location>
        <position position="109"/>
    </location>
    <ligand>
        <name>DNA</name>
        <dbReference type="ChEBI" id="CHEBI:16991"/>
    </ligand>
</feature>
<feature type="binding site" evidence="2">
    <location>
        <position position="151"/>
    </location>
    <ligand>
        <name>DNA</name>
        <dbReference type="ChEBI" id="CHEBI:16991"/>
    </ligand>
</feature>
<protein>
    <recommendedName>
        <fullName evidence="2">Formamidopyrimidine-DNA glycosylase</fullName>
        <shortName evidence="2">Fapy-DNA glycosylase</shortName>
        <ecNumber evidence="2">3.2.2.23</ecNumber>
    </recommendedName>
    <alternativeName>
        <fullName evidence="2">DNA-(apurinic or apyrimidinic site) lyase MutM</fullName>
        <shortName evidence="2">AP lyase MutM</shortName>
        <ecNumber evidence="2">4.2.99.18</ecNumber>
    </alternativeName>
</protein>
<proteinExistence type="inferred from homology"/>
<sequence length="271" mass="29706">MPELPEVEVTRQGIAPHLEGNRVEALIVRNANLRWPVPELAQNIVGQTILGVRRRAKYLLIDTQAGTTIVHLGMSGSLRVLPKNTPVEKHDHIDLVMQNGRVLRFNDPRRFGAWLWSELPEAAHPLLEKLGPEPLSAAFHADYLQAALKGKKKAIKLCLMDNAIVVGVGNIYANEALFAAGIHPEAEAGKVDAERLTLLTAEVKTILTQAIKQGGTTLKDFTNADGKPGYFAQKLHVYGRGGETCTECGHLLSEIRLGQRTTVFCSLCQTK</sequence>
<accession>A1S1S3</accession>
<dbReference type="EC" id="3.2.2.23" evidence="2"/>
<dbReference type="EC" id="4.2.99.18" evidence="2"/>
<dbReference type="EMBL" id="CP000507">
    <property type="protein sequence ID" value="ABL98329.1"/>
    <property type="molecule type" value="Genomic_DNA"/>
</dbReference>
<dbReference type="RefSeq" id="WP_011758240.1">
    <property type="nucleotide sequence ID" value="NC_008700.1"/>
</dbReference>
<dbReference type="SMR" id="A1S1S3"/>
<dbReference type="STRING" id="326297.Sama_0117"/>
<dbReference type="KEGG" id="saz:Sama_0117"/>
<dbReference type="eggNOG" id="COG0266">
    <property type="taxonomic scope" value="Bacteria"/>
</dbReference>
<dbReference type="HOGENOM" id="CLU_038423_1_1_6"/>
<dbReference type="OrthoDB" id="9800855at2"/>
<dbReference type="Proteomes" id="UP000009175">
    <property type="component" value="Chromosome"/>
</dbReference>
<dbReference type="GO" id="GO:0034039">
    <property type="term" value="F:8-oxo-7,8-dihydroguanine DNA N-glycosylase activity"/>
    <property type="evidence" value="ECO:0007669"/>
    <property type="project" value="TreeGrafter"/>
</dbReference>
<dbReference type="GO" id="GO:0140078">
    <property type="term" value="F:class I DNA-(apurinic or apyrimidinic site) endonuclease activity"/>
    <property type="evidence" value="ECO:0007669"/>
    <property type="project" value="UniProtKB-EC"/>
</dbReference>
<dbReference type="GO" id="GO:0003684">
    <property type="term" value="F:damaged DNA binding"/>
    <property type="evidence" value="ECO:0007669"/>
    <property type="project" value="InterPro"/>
</dbReference>
<dbReference type="GO" id="GO:0008270">
    <property type="term" value="F:zinc ion binding"/>
    <property type="evidence" value="ECO:0007669"/>
    <property type="project" value="UniProtKB-UniRule"/>
</dbReference>
<dbReference type="GO" id="GO:0006284">
    <property type="term" value="P:base-excision repair"/>
    <property type="evidence" value="ECO:0007669"/>
    <property type="project" value="InterPro"/>
</dbReference>
<dbReference type="CDD" id="cd08966">
    <property type="entry name" value="EcFpg-like_N"/>
    <property type="match status" value="1"/>
</dbReference>
<dbReference type="FunFam" id="1.10.8.50:FF:000003">
    <property type="entry name" value="Formamidopyrimidine-DNA glycosylase"/>
    <property type="match status" value="1"/>
</dbReference>
<dbReference type="FunFam" id="3.20.190.10:FF:000001">
    <property type="entry name" value="Formamidopyrimidine-DNA glycosylase"/>
    <property type="match status" value="1"/>
</dbReference>
<dbReference type="Gene3D" id="1.10.8.50">
    <property type="match status" value="1"/>
</dbReference>
<dbReference type="Gene3D" id="3.20.190.10">
    <property type="entry name" value="MutM-like, N-terminal"/>
    <property type="match status" value="1"/>
</dbReference>
<dbReference type="HAMAP" id="MF_00103">
    <property type="entry name" value="Fapy_DNA_glycosyl"/>
    <property type="match status" value="1"/>
</dbReference>
<dbReference type="InterPro" id="IPR015886">
    <property type="entry name" value="DNA_glyclase/AP_lyase_DNA-bd"/>
</dbReference>
<dbReference type="InterPro" id="IPR015887">
    <property type="entry name" value="DNA_glyclase_Znf_dom_DNA_BS"/>
</dbReference>
<dbReference type="InterPro" id="IPR020629">
    <property type="entry name" value="Formamido-pyr_DNA_Glyclase"/>
</dbReference>
<dbReference type="InterPro" id="IPR012319">
    <property type="entry name" value="FPG_cat"/>
</dbReference>
<dbReference type="InterPro" id="IPR035937">
    <property type="entry name" value="MutM-like_N-ter"/>
</dbReference>
<dbReference type="InterPro" id="IPR010979">
    <property type="entry name" value="Ribosomal_uS13-like_H2TH"/>
</dbReference>
<dbReference type="InterPro" id="IPR000214">
    <property type="entry name" value="Znf_DNA_glyclase/AP_lyase"/>
</dbReference>
<dbReference type="InterPro" id="IPR010663">
    <property type="entry name" value="Znf_FPG/IleRS"/>
</dbReference>
<dbReference type="NCBIfam" id="TIGR00577">
    <property type="entry name" value="fpg"/>
    <property type="match status" value="1"/>
</dbReference>
<dbReference type="NCBIfam" id="NF002211">
    <property type="entry name" value="PRK01103.1"/>
    <property type="match status" value="1"/>
</dbReference>
<dbReference type="PANTHER" id="PTHR22993">
    <property type="entry name" value="FORMAMIDOPYRIMIDINE-DNA GLYCOSYLASE"/>
    <property type="match status" value="1"/>
</dbReference>
<dbReference type="PANTHER" id="PTHR22993:SF9">
    <property type="entry name" value="FORMAMIDOPYRIMIDINE-DNA GLYCOSYLASE"/>
    <property type="match status" value="1"/>
</dbReference>
<dbReference type="Pfam" id="PF01149">
    <property type="entry name" value="Fapy_DNA_glyco"/>
    <property type="match status" value="1"/>
</dbReference>
<dbReference type="Pfam" id="PF06831">
    <property type="entry name" value="H2TH"/>
    <property type="match status" value="1"/>
</dbReference>
<dbReference type="Pfam" id="PF06827">
    <property type="entry name" value="zf-FPG_IleRS"/>
    <property type="match status" value="1"/>
</dbReference>
<dbReference type="SMART" id="SM00898">
    <property type="entry name" value="Fapy_DNA_glyco"/>
    <property type="match status" value="1"/>
</dbReference>
<dbReference type="SMART" id="SM01232">
    <property type="entry name" value="H2TH"/>
    <property type="match status" value="1"/>
</dbReference>
<dbReference type="SUPFAM" id="SSF57716">
    <property type="entry name" value="Glucocorticoid receptor-like (DNA-binding domain)"/>
    <property type="match status" value="1"/>
</dbReference>
<dbReference type="SUPFAM" id="SSF81624">
    <property type="entry name" value="N-terminal domain of MutM-like DNA repair proteins"/>
    <property type="match status" value="1"/>
</dbReference>
<dbReference type="SUPFAM" id="SSF46946">
    <property type="entry name" value="S13-like H2TH domain"/>
    <property type="match status" value="1"/>
</dbReference>
<dbReference type="PROSITE" id="PS51068">
    <property type="entry name" value="FPG_CAT"/>
    <property type="match status" value="1"/>
</dbReference>
<dbReference type="PROSITE" id="PS01242">
    <property type="entry name" value="ZF_FPG_1"/>
    <property type="match status" value="1"/>
</dbReference>
<dbReference type="PROSITE" id="PS51066">
    <property type="entry name" value="ZF_FPG_2"/>
    <property type="match status" value="1"/>
</dbReference>
<name>FPG_SHEAM</name>